<accession>Q5FTF9</accession>
<keyword id="KW-0223">Dioxygenase</keyword>
<keyword id="KW-0408">Iron</keyword>
<keyword id="KW-0479">Metal-binding</keyword>
<keyword id="KW-0560">Oxidoreductase</keyword>
<keyword id="KW-1185">Reference proteome</keyword>
<keyword id="KW-0847">Vitamin C</keyword>
<proteinExistence type="inferred from homology"/>
<reference key="1">
    <citation type="journal article" date="2005" name="Nat. Biotechnol.">
        <title>Complete genome sequence of the acetic acid bacterium Gluconobacter oxydans.</title>
        <authorList>
            <person name="Prust C."/>
            <person name="Hoffmeister M."/>
            <person name="Liesegang H."/>
            <person name="Wiezer A."/>
            <person name="Fricke W.F."/>
            <person name="Ehrenreich A."/>
            <person name="Gottschalk G."/>
            <person name="Deppenmeier U."/>
        </authorList>
    </citation>
    <scope>NUCLEOTIDE SEQUENCE [LARGE SCALE GENOMIC DNA]</scope>
    <source>
        <strain>621H</strain>
    </source>
</reference>
<name>Y559_GLUOX</name>
<protein>
    <recommendedName>
        <fullName evidence="1">PKHD-type hydroxylase GOX0559</fullName>
        <ecNumber evidence="1">1.14.11.-</ecNumber>
    </recommendedName>
</protein>
<comment type="cofactor">
    <cofactor evidence="1">
        <name>Fe(2+)</name>
        <dbReference type="ChEBI" id="CHEBI:29033"/>
    </cofactor>
    <text evidence="1">Binds 1 Fe(2+) ion per subunit.</text>
</comment>
<comment type="cofactor">
    <cofactor evidence="1">
        <name>L-ascorbate</name>
        <dbReference type="ChEBI" id="CHEBI:38290"/>
    </cofactor>
</comment>
<evidence type="ECO:0000255" key="1">
    <source>
        <dbReference type="HAMAP-Rule" id="MF_00657"/>
    </source>
</evidence>
<sequence length="227" mass="25714">MLLHIPNVLSPEEVRYFRDRLEDAEWTDGRVTAGEQSAKAKLNLQIPQDSAECRELGEFVLRALGRNPTFNSAALPLRVYPPLFNRYDTGMHFDAHVDNAIRPIPGAGMRIRTDVSSTLFLTGPDEYDGGELVIQDTYGTQSVKLPAGDMVLYPSTSLHSVNRITRGSRWASFFWSQSMVRDDTKRRLLYEFDCSIIETRKALPDSHPAVLGLTSTYHNLLRQWAEL</sequence>
<organism>
    <name type="scientific">Gluconobacter oxydans (strain 621H)</name>
    <name type="common">Gluconobacter suboxydans</name>
    <dbReference type="NCBI Taxonomy" id="290633"/>
    <lineage>
        <taxon>Bacteria</taxon>
        <taxon>Pseudomonadati</taxon>
        <taxon>Pseudomonadota</taxon>
        <taxon>Alphaproteobacteria</taxon>
        <taxon>Acetobacterales</taxon>
        <taxon>Acetobacteraceae</taxon>
        <taxon>Gluconobacter</taxon>
    </lineage>
</organism>
<dbReference type="EC" id="1.14.11.-" evidence="1"/>
<dbReference type="EMBL" id="CP000009">
    <property type="protein sequence ID" value="AAW60337.1"/>
    <property type="molecule type" value="Genomic_DNA"/>
</dbReference>
<dbReference type="RefSeq" id="WP_011252136.1">
    <property type="nucleotide sequence ID" value="NC_006677.1"/>
</dbReference>
<dbReference type="SMR" id="Q5FTF9"/>
<dbReference type="STRING" id="290633.GOX0559"/>
<dbReference type="KEGG" id="gox:GOX0559"/>
<dbReference type="eggNOG" id="COG3128">
    <property type="taxonomic scope" value="Bacteria"/>
</dbReference>
<dbReference type="HOGENOM" id="CLU_106663_0_0_5"/>
<dbReference type="Proteomes" id="UP000006375">
    <property type="component" value="Chromosome"/>
</dbReference>
<dbReference type="GO" id="GO:0016706">
    <property type="term" value="F:2-oxoglutarate-dependent dioxygenase activity"/>
    <property type="evidence" value="ECO:0007669"/>
    <property type="project" value="UniProtKB-UniRule"/>
</dbReference>
<dbReference type="GO" id="GO:0005506">
    <property type="term" value="F:iron ion binding"/>
    <property type="evidence" value="ECO:0007669"/>
    <property type="project" value="UniProtKB-UniRule"/>
</dbReference>
<dbReference type="GO" id="GO:0031418">
    <property type="term" value="F:L-ascorbic acid binding"/>
    <property type="evidence" value="ECO:0007669"/>
    <property type="project" value="UniProtKB-KW"/>
</dbReference>
<dbReference type="GO" id="GO:0006974">
    <property type="term" value="P:DNA damage response"/>
    <property type="evidence" value="ECO:0007669"/>
    <property type="project" value="TreeGrafter"/>
</dbReference>
<dbReference type="GO" id="GO:0006879">
    <property type="term" value="P:intracellular iron ion homeostasis"/>
    <property type="evidence" value="ECO:0007669"/>
    <property type="project" value="TreeGrafter"/>
</dbReference>
<dbReference type="Gene3D" id="2.60.120.620">
    <property type="entry name" value="q2cbj1_9rhob like domain"/>
    <property type="match status" value="1"/>
</dbReference>
<dbReference type="Gene3D" id="4.10.860.20">
    <property type="entry name" value="Rabenosyn, Rab binding domain"/>
    <property type="match status" value="1"/>
</dbReference>
<dbReference type="HAMAP" id="MF_00657">
    <property type="entry name" value="Hydroxyl_YbiX"/>
    <property type="match status" value="1"/>
</dbReference>
<dbReference type="InterPro" id="IPR005123">
    <property type="entry name" value="Oxoglu/Fe-dep_dioxygenase_dom"/>
</dbReference>
<dbReference type="InterPro" id="IPR041097">
    <property type="entry name" value="PKHD_C"/>
</dbReference>
<dbReference type="InterPro" id="IPR023550">
    <property type="entry name" value="PKHD_hydroxylase"/>
</dbReference>
<dbReference type="InterPro" id="IPR006620">
    <property type="entry name" value="Pro_4_hyd_alph"/>
</dbReference>
<dbReference type="InterPro" id="IPR044862">
    <property type="entry name" value="Pro_4_hyd_alph_FE2OG_OXY"/>
</dbReference>
<dbReference type="NCBIfam" id="NF003974">
    <property type="entry name" value="PRK05467.1-3"/>
    <property type="match status" value="1"/>
</dbReference>
<dbReference type="NCBIfam" id="NF003975">
    <property type="entry name" value="PRK05467.1-4"/>
    <property type="match status" value="1"/>
</dbReference>
<dbReference type="PANTHER" id="PTHR41536">
    <property type="entry name" value="PKHD-TYPE HYDROXYLASE YBIX"/>
    <property type="match status" value="1"/>
</dbReference>
<dbReference type="PANTHER" id="PTHR41536:SF1">
    <property type="entry name" value="PKHD-TYPE HYDROXYLASE YBIX"/>
    <property type="match status" value="1"/>
</dbReference>
<dbReference type="Pfam" id="PF13640">
    <property type="entry name" value="2OG-FeII_Oxy_3"/>
    <property type="match status" value="1"/>
</dbReference>
<dbReference type="Pfam" id="PF18331">
    <property type="entry name" value="PKHD_C"/>
    <property type="match status" value="1"/>
</dbReference>
<dbReference type="SMART" id="SM00702">
    <property type="entry name" value="P4Hc"/>
    <property type="match status" value="1"/>
</dbReference>
<dbReference type="SUPFAM" id="SSF51197">
    <property type="entry name" value="Clavaminate synthase-like"/>
    <property type="match status" value="1"/>
</dbReference>
<dbReference type="PROSITE" id="PS51471">
    <property type="entry name" value="FE2OG_OXY"/>
    <property type="match status" value="1"/>
</dbReference>
<gene>
    <name type="ordered locus">GOX0559</name>
</gene>
<feature type="chain" id="PRO_1000061720" description="PKHD-type hydroxylase GOX0559">
    <location>
        <begin position="1"/>
        <end position="227"/>
    </location>
</feature>
<feature type="domain" description="Fe2OG dioxygenase" evidence="1">
    <location>
        <begin position="78"/>
        <end position="178"/>
    </location>
</feature>
<feature type="binding site" evidence="1">
    <location>
        <position position="96"/>
    </location>
    <ligand>
        <name>Fe cation</name>
        <dbReference type="ChEBI" id="CHEBI:24875"/>
    </ligand>
</feature>
<feature type="binding site" evidence="1">
    <location>
        <position position="98"/>
    </location>
    <ligand>
        <name>Fe cation</name>
        <dbReference type="ChEBI" id="CHEBI:24875"/>
    </ligand>
</feature>
<feature type="binding site" evidence="1">
    <location>
        <position position="159"/>
    </location>
    <ligand>
        <name>Fe cation</name>
        <dbReference type="ChEBI" id="CHEBI:24875"/>
    </ligand>
</feature>
<feature type="binding site" evidence="1">
    <location>
        <position position="169"/>
    </location>
    <ligand>
        <name>2-oxoglutarate</name>
        <dbReference type="ChEBI" id="CHEBI:16810"/>
    </ligand>
</feature>